<sequence>MIGLVGKKVGMTRIFTEDGVSIPVTVIEVEANRVTQVKDLANDGYRAIQVTTGAKKANRVTKPEAGHFAKAGVEAGRGLWEFRLAEGEEFTVGQSISVELFADVKKVDVTGTSKGKGFAGTVKRWNFRTQDATHGNSLSHRVPGSIGQNQTPGKVFKGKKMAGQMGNERVTVQSLDVVRVDAERNLLLVKGAVPGATGSDLIVKPAVKA</sequence>
<comment type="function">
    <text evidence="1">One of the primary rRNA binding proteins, it binds directly near the 3'-end of the 23S rRNA, where it nucleates assembly of the 50S subunit.</text>
</comment>
<comment type="subunit">
    <text evidence="1">Part of the 50S ribosomal subunit. Forms a cluster with proteins L14 and L19.</text>
</comment>
<comment type="PTM">
    <text evidence="1">Methylated by PrmB.</text>
</comment>
<comment type="similarity">
    <text evidence="1">Belongs to the universal ribosomal protein uL3 family.</text>
</comment>
<reference key="1">
    <citation type="journal article" date="2009" name="PLoS Genet.">
        <title>Organised genome dynamics in the Escherichia coli species results in highly diverse adaptive paths.</title>
        <authorList>
            <person name="Touchon M."/>
            <person name="Hoede C."/>
            <person name="Tenaillon O."/>
            <person name="Barbe V."/>
            <person name="Baeriswyl S."/>
            <person name="Bidet P."/>
            <person name="Bingen E."/>
            <person name="Bonacorsi S."/>
            <person name="Bouchier C."/>
            <person name="Bouvet O."/>
            <person name="Calteau A."/>
            <person name="Chiapello H."/>
            <person name="Clermont O."/>
            <person name="Cruveiller S."/>
            <person name="Danchin A."/>
            <person name="Diard M."/>
            <person name="Dossat C."/>
            <person name="Karoui M.E."/>
            <person name="Frapy E."/>
            <person name="Garry L."/>
            <person name="Ghigo J.M."/>
            <person name="Gilles A.M."/>
            <person name="Johnson J."/>
            <person name="Le Bouguenec C."/>
            <person name="Lescat M."/>
            <person name="Mangenot S."/>
            <person name="Martinez-Jehanne V."/>
            <person name="Matic I."/>
            <person name="Nassif X."/>
            <person name="Oztas S."/>
            <person name="Petit M.A."/>
            <person name="Pichon C."/>
            <person name="Rouy Z."/>
            <person name="Ruf C.S."/>
            <person name="Schneider D."/>
            <person name="Tourret J."/>
            <person name="Vacherie B."/>
            <person name="Vallenet D."/>
            <person name="Medigue C."/>
            <person name="Rocha E.P.C."/>
            <person name="Denamur E."/>
        </authorList>
    </citation>
    <scope>NUCLEOTIDE SEQUENCE [LARGE SCALE GENOMIC DNA]</scope>
    <source>
        <strain>ATCC 35469 / DSM 13698 / BCRC 15582 / CCUG 18766 / IAM 14443 / JCM 21226 / LMG 7866 / NBRC 102419 / NCTC 12128 / CDC 0568-73</strain>
    </source>
</reference>
<name>RL3_ESCF3</name>
<dbReference type="EMBL" id="CU928158">
    <property type="protein sequence ID" value="CAQ90783.1"/>
    <property type="molecule type" value="Genomic_DNA"/>
</dbReference>
<dbReference type="RefSeq" id="WP_000579833.1">
    <property type="nucleotide sequence ID" value="NC_011740.1"/>
</dbReference>
<dbReference type="SMR" id="B7LS40"/>
<dbReference type="GeneID" id="86948184"/>
<dbReference type="KEGG" id="efe:EFER_3303"/>
<dbReference type="HOGENOM" id="CLU_044142_4_1_6"/>
<dbReference type="OrthoDB" id="9806135at2"/>
<dbReference type="Proteomes" id="UP000000745">
    <property type="component" value="Chromosome"/>
</dbReference>
<dbReference type="GO" id="GO:0022625">
    <property type="term" value="C:cytosolic large ribosomal subunit"/>
    <property type="evidence" value="ECO:0007669"/>
    <property type="project" value="TreeGrafter"/>
</dbReference>
<dbReference type="GO" id="GO:0019843">
    <property type="term" value="F:rRNA binding"/>
    <property type="evidence" value="ECO:0007669"/>
    <property type="project" value="UniProtKB-UniRule"/>
</dbReference>
<dbReference type="GO" id="GO:0003735">
    <property type="term" value="F:structural constituent of ribosome"/>
    <property type="evidence" value="ECO:0007669"/>
    <property type="project" value="InterPro"/>
</dbReference>
<dbReference type="GO" id="GO:0006412">
    <property type="term" value="P:translation"/>
    <property type="evidence" value="ECO:0007669"/>
    <property type="project" value="UniProtKB-UniRule"/>
</dbReference>
<dbReference type="FunFam" id="2.40.30.10:FF:000004">
    <property type="entry name" value="50S ribosomal protein L3"/>
    <property type="match status" value="1"/>
</dbReference>
<dbReference type="FunFam" id="3.30.160.810:FF:000001">
    <property type="entry name" value="50S ribosomal protein L3"/>
    <property type="match status" value="1"/>
</dbReference>
<dbReference type="Gene3D" id="3.30.160.810">
    <property type="match status" value="1"/>
</dbReference>
<dbReference type="Gene3D" id="2.40.30.10">
    <property type="entry name" value="Translation factors"/>
    <property type="match status" value="1"/>
</dbReference>
<dbReference type="HAMAP" id="MF_01325_B">
    <property type="entry name" value="Ribosomal_uL3_B"/>
    <property type="match status" value="1"/>
</dbReference>
<dbReference type="InterPro" id="IPR000597">
    <property type="entry name" value="Ribosomal_uL3"/>
</dbReference>
<dbReference type="InterPro" id="IPR019927">
    <property type="entry name" value="Ribosomal_uL3_bac/org-type"/>
</dbReference>
<dbReference type="InterPro" id="IPR019926">
    <property type="entry name" value="Ribosomal_uL3_CS"/>
</dbReference>
<dbReference type="InterPro" id="IPR009000">
    <property type="entry name" value="Transl_B-barrel_sf"/>
</dbReference>
<dbReference type="NCBIfam" id="TIGR03625">
    <property type="entry name" value="L3_bact"/>
    <property type="match status" value="1"/>
</dbReference>
<dbReference type="PANTHER" id="PTHR11229">
    <property type="entry name" value="50S RIBOSOMAL PROTEIN L3"/>
    <property type="match status" value="1"/>
</dbReference>
<dbReference type="PANTHER" id="PTHR11229:SF16">
    <property type="entry name" value="LARGE RIBOSOMAL SUBUNIT PROTEIN UL3C"/>
    <property type="match status" value="1"/>
</dbReference>
<dbReference type="Pfam" id="PF00297">
    <property type="entry name" value="Ribosomal_L3"/>
    <property type="match status" value="1"/>
</dbReference>
<dbReference type="SUPFAM" id="SSF50447">
    <property type="entry name" value="Translation proteins"/>
    <property type="match status" value="1"/>
</dbReference>
<dbReference type="PROSITE" id="PS00474">
    <property type="entry name" value="RIBOSOMAL_L3"/>
    <property type="match status" value="1"/>
</dbReference>
<keyword id="KW-0488">Methylation</keyword>
<keyword id="KW-0687">Ribonucleoprotein</keyword>
<keyword id="KW-0689">Ribosomal protein</keyword>
<keyword id="KW-0694">RNA-binding</keyword>
<keyword id="KW-0699">rRNA-binding</keyword>
<protein>
    <recommendedName>
        <fullName evidence="1">Large ribosomal subunit protein uL3</fullName>
    </recommendedName>
    <alternativeName>
        <fullName evidence="2">50S ribosomal protein L3</fullName>
    </alternativeName>
</protein>
<proteinExistence type="inferred from homology"/>
<gene>
    <name evidence="1" type="primary">rplC</name>
    <name type="ordered locus">EFER_3303</name>
</gene>
<accession>B7LS40</accession>
<feature type="chain" id="PRO_1000141868" description="Large ribosomal subunit protein uL3">
    <location>
        <begin position="1"/>
        <end position="209"/>
    </location>
</feature>
<feature type="modified residue" description="N5-methylglutamine" evidence="1">
    <location>
        <position position="150"/>
    </location>
</feature>
<evidence type="ECO:0000255" key="1">
    <source>
        <dbReference type="HAMAP-Rule" id="MF_01325"/>
    </source>
</evidence>
<evidence type="ECO:0000305" key="2"/>
<organism>
    <name type="scientific">Escherichia fergusonii (strain ATCC 35469 / DSM 13698 / CCUG 18766 / IAM 14443 / JCM 21226 / LMG 7866 / NBRC 102419 / NCTC 12128 / CDC 0568-73)</name>
    <dbReference type="NCBI Taxonomy" id="585054"/>
    <lineage>
        <taxon>Bacteria</taxon>
        <taxon>Pseudomonadati</taxon>
        <taxon>Pseudomonadota</taxon>
        <taxon>Gammaproteobacteria</taxon>
        <taxon>Enterobacterales</taxon>
        <taxon>Enterobacteriaceae</taxon>
        <taxon>Escherichia</taxon>
    </lineage>
</organism>